<comment type="function">
    <text evidence="1">Minor protein of the capsid that localizes along the inner surface of the virion, within the central cavities beneath the L1 pentamers. Plays a role in capsid stabilization through interaction with the major capsid protein L1. Once the virion enters the host cell, L2 escorts the genomic DNA into the nucleus by promoting escape from the endosomal compartments and traffic through the host Golgi network. Mechanistically, the C-terminus of L2 possesses a cell-penetrating peptide that protudes from the host endosome, interacts with host cytoplasmic retromer cargo and thereby mediates the capsid delivery to the host trans-Golgi network. Plays a role through its interaction with host dynein in the intracellular microtubule-dependent transport of viral capsid toward the nucleus. Mediates the viral genome import into the nucleus through binding to host importins. Once within the nucleus, L2 localizes viral genomes to host PML bodies in order to activate early gene expression for establishment of infection. Later on, promotes late gene expression by interacting with the viral E2 protein and by inhibiting its transcriptional activation functions. During virion assembly, encapsidates the genome by direct interaction with the viral DNA.</text>
</comment>
<comment type="subunit">
    <text evidence="1">Interacts with major capsid protein L1. Interacts with E2; this interaction inhibits E2 transcriptional activity but not the DNA replication function E2. Interacts with host GADD45GIP1. Interacts with host HSPA8; this interaction is required for L2 nuclear translocation. Interacts with host importins KPNB2 and KPNB3. Forms a complex with importin alpha2-beta1 heterodimers via interaction with the importin alpha2 adapter. Interacts with host DYNLT1; this interaction is essential for virus intracellular transport during entry. Interacts (via C-terminus) with host retromer subunits VPS35 and VPS29.</text>
</comment>
<comment type="subcellular location">
    <subcellularLocation>
        <location evidence="1">Virion</location>
    </subcellularLocation>
    <subcellularLocation>
        <location evidence="1">Host nucleus</location>
    </subcellularLocation>
    <subcellularLocation>
        <location evidence="1">Host early endosome</location>
    </subcellularLocation>
    <subcellularLocation>
        <location evidence="1">Host Golgi apparatus</location>
    </subcellularLocation>
</comment>
<comment type="PTM">
    <text evidence="1">Highly phosphorylated.</text>
</comment>
<comment type="similarity">
    <text evidence="1">Belongs to the papillomaviridae L2 protein family.</text>
</comment>
<sequence length="518" mass="56492">MARAKRVKRDSVTHIYQTCKQAGTCPPDVVNKVEQTTVADNILKYGSAGVFFGGLGIGSGRGTGGATGYVPLSEGPGIRVGGTPTVVRPSLVPEAIGPVDILPIDTIDPVEPTASSVVPLTESTGPDLLPGEVETIAEIHPVAEGPSVDTPVVTTSTGSSAVLEVAPEPIPPTRVRISRTQYHNPSFQIITESTPAQGESSLADHILVTSGSGGQRIGADITDEIELQELPSRYTFENEEPTPPRRSSTPLQATRAAGRRRGVSLTNRRLVQQVPVENPLFLTQPSRLVRFAFENPAFEEEVTNIFEHDVDAFEEPPDRDFLDVQRLGRPQYSTTPAGYVRVSRLGTRATIRTRSGAQIGSQVHFYRDLSSINTEDPIELQLLGQHSGDASIVQGPVESTFIDVNVSENPLSESVEAFSDDLLLDEAVEDFSGSQLVIGNRRSTTSYTVPRFETTRSGSYYVQDSKGYYVAYPESRNNAEIIYPTPDIPVVVIHTHDNTGDFYLHPSLRWRKRKRKYL</sequence>
<accession>P50827</accession>
<dbReference type="EMBL" id="U31785">
    <property type="protein sequence ID" value="AAA79441.1"/>
    <property type="molecule type" value="Genomic_DNA"/>
</dbReference>
<dbReference type="Proteomes" id="UP000009167">
    <property type="component" value="Genome"/>
</dbReference>
<dbReference type="GO" id="GO:0043657">
    <property type="term" value="C:host cell"/>
    <property type="evidence" value="ECO:0007669"/>
    <property type="project" value="GOC"/>
</dbReference>
<dbReference type="GO" id="GO:0044174">
    <property type="term" value="C:host cell endosome"/>
    <property type="evidence" value="ECO:0007669"/>
    <property type="project" value="UniProtKB-KW"/>
</dbReference>
<dbReference type="GO" id="GO:0044177">
    <property type="term" value="C:host cell Golgi apparatus"/>
    <property type="evidence" value="ECO:0007669"/>
    <property type="project" value="UniProtKB-SubCell"/>
</dbReference>
<dbReference type="GO" id="GO:0042025">
    <property type="term" value="C:host cell nucleus"/>
    <property type="evidence" value="ECO:0007669"/>
    <property type="project" value="UniProtKB-SubCell"/>
</dbReference>
<dbReference type="GO" id="GO:0019028">
    <property type="term" value="C:viral capsid"/>
    <property type="evidence" value="ECO:0007669"/>
    <property type="project" value="UniProtKB-UniRule"/>
</dbReference>
<dbReference type="GO" id="GO:0003677">
    <property type="term" value="F:DNA binding"/>
    <property type="evidence" value="ECO:0007669"/>
    <property type="project" value="UniProtKB-UniRule"/>
</dbReference>
<dbReference type="GO" id="GO:0005198">
    <property type="term" value="F:structural molecule activity"/>
    <property type="evidence" value="ECO:0007669"/>
    <property type="project" value="UniProtKB-UniRule"/>
</dbReference>
<dbReference type="GO" id="GO:0075521">
    <property type="term" value="P:microtubule-dependent intracellular transport of viral material towards nucleus"/>
    <property type="evidence" value="ECO:0007669"/>
    <property type="project" value="UniProtKB-UniRule"/>
</dbReference>
<dbReference type="GO" id="GO:0046718">
    <property type="term" value="P:symbiont entry into host cell"/>
    <property type="evidence" value="ECO:0007669"/>
    <property type="project" value="UniProtKB-KW"/>
</dbReference>
<dbReference type="GO" id="GO:0075732">
    <property type="term" value="P:viral penetration into host nucleus"/>
    <property type="evidence" value="ECO:0007669"/>
    <property type="project" value="UniProtKB-KW"/>
</dbReference>
<dbReference type="HAMAP" id="MF_04003">
    <property type="entry name" value="PPV_L2"/>
    <property type="match status" value="1"/>
</dbReference>
<dbReference type="InterPro" id="IPR000784">
    <property type="entry name" value="Late_L2"/>
</dbReference>
<dbReference type="Pfam" id="PF00513">
    <property type="entry name" value="Late_protein_L2"/>
    <property type="match status" value="1"/>
</dbReference>
<organism>
    <name type="scientific">Human papillomavirus 36</name>
    <dbReference type="NCBI Taxonomy" id="37957"/>
    <lineage>
        <taxon>Viruses</taxon>
        <taxon>Monodnaviria</taxon>
        <taxon>Shotokuvirae</taxon>
        <taxon>Cossaviricota</taxon>
        <taxon>Papovaviricetes</taxon>
        <taxon>Zurhausenvirales</taxon>
        <taxon>Papillomaviridae</taxon>
        <taxon>Firstpapillomavirinae</taxon>
        <taxon>Betapapillomavirus</taxon>
        <taxon>Betapapillomavirus 1</taxon>
    </lineage>
</organism>
<organismHost>
    <name type="scientific">Homo sapiens</name>
    <name type="common">Human</name>
    <dbReference type="NCBI Taxonomy" id="9606"/>
</organismHost>
<name>VL2_HPV36</name>
<evidence type="ECO:0000255" key="1">
    <source>
        <dbReference type="HAMAP-Rule" id="MF_04003"/>
    </source>
</evidence>
<evidence type="ECO:0000256" key="2">
    <source>
        <dbReference type="SAM" id="MobiDB-lite"/>
    </source>
</evidence>
<protein>
    <recommendedName>
        <fullName evidence="1">Minor capsid protein L2</fullName>
    </recommendedName>
</protein>
<keyword id="KW-0167">Capsid protein</keyword>
<keyword id="KW-1176">Cytoplasmic inwards viral transport</keyword>
<keyword id="KW-1015">Disulfide bond</keyword>
<keyword id="KW-0238">DNA-binding</keyword>
<keyword id="KW-1039">Host endosome</keyword>
<keyword id="KW-1040">Host Golgi apparatus</keyword>
<keyword id="KW-1048">Host nucleus</keyword>
<keyword id="KW-0945">Host-virus interaction</keyword>
<keyword id="KW-0426">Late protein</keyword>
<keyword id="KW-1177">Microtubular inwards viral transport</keyword>
<keyword id="KW-0597">Phosphoprotein</keyword>
<keyword id="KW-1163">Viral penetration into host nucleus</keyword>
<keyword id="KW-0946">Virion</keyword>
<keyword id="KW-1160">Virus entry into host cell</keyword>
<feature type="chain" id="PRO_0000133603" description="Minor capsid protein L2">
    <location>
        <begin position="1"/>
        <end position="518"/>
    </location>
</feature>
<feature type="region of interest" description="Disordered" evidence="2">
    <location>
        <begin position="235"/>
        <end position="261"/>
    </location>
</feature>
<feature type="short sequence motif" description="Nuclear localization signal" evidence="1">
    <location>
        <begin position="1"/>
        <end position="10"/>
    </location>
</feature>
<feature type="short sequence motif" description="Nuclear localization signal" evidence="1">
    <location>
        <begin position="510"/>
        <end position="517"/>
    </location>
</feature>
<feature type="disulfide bond" evidence="1">
    <location>
        <begin position="19"/>
        <end position="25"/>
    </location>
</feature>
<gene>
    <name evidence="1" type="primary">L2</name>
</gene>
<reference key="1">
    <citation type="submission" date="1995-10" db="EMBL/GenBank/DDBJ databases">
        <authorList>
            <person name="Delius H."/>
        </authorList>
    </citation>
    <scope>NUCLEOTIDE SEQUENCE [GENOMIC DNA]</scope>
</reference>
<proteinExistence type="inferred from homology"/>